<name>GRPE_SHELP</name>
<comment type="function">
    <text evidence="1">Participates actively in the response to hyperosmotic and heat shock by preventing the aggregation of stress-denatured proteins, in association with DnaK and GrpE. It is the nucleotide exchange factor for DnaK and may function as a thermosensor. Unfolded proteins bind initially to DnaJ; upon interaction with the DnaJ-bound protein, DnaK hydrolyzes its bound ATP, resulting in the formation of a stable complex. GrpE releases ADP from DnaK; ATP binding to DnaK triggers the release of the substrate protein, thus completing the reaction cycle. Several rounds of ATP-dependent interactions between DnaJ, DnaK and GrpE are required for fully efficient folding.</text>
</comment>
<comment type="subunit">
    <text evidence="1">Homodimer.</text>
</comment>
<comment type="subcellular location">
    <subcellularLocation>
        <location evidence="1">Cytoplasm</location>
    </subcellularLocation>
</comment>
<comment type="similarity">
    <text evidence="1">Belongs to the GrpE family.</text>
</comment>
<feature type="chain" id="PRO_1000053638" description="Protein GrpE">
    <location>
        <begin position="1"/>
        <end position="205"/>
    </location>
</feature>
<proteinExistence type="inferred from homology"/>
<keyword id="KW-0143">Chaperone</keyword>
<keyword id="KW-0963">Cytoplasm</keyword>
<keyword id="KW-1185">Reference proteome</keyword>
<keyword id="KW-0346">Stress response</keyword>
<evidence type="ECO:0000255" key="1">
    <source>
        <dbReference type="HAMAP-Rule" id="MF_01151"/>
    </source>
</evidence>
<organism>
    <name type="scientific">Shewanella loihica (strain ATCC BAA-1088 / PV-4)</name>
    <dbReference type="NCBI Taxonomy" id="323850"/>
    <lineage>
        <taxon>Bacteria</taxon>
        <taxon>Pseudomonadati</taxon>
        <taxon>Pseudomonadota</taxon>
        <taxon>Gammaproteobacteria</taxon>
        <taxon>Alteromonadales</taxon>
        <taxon>Shewanellaceae</taxon>
        <taxon>Shewanella</taxon>
    </lineage>
</organism>
<sequence>MSKESNKAQEPQIEETEAVAVETEVVEDAASLMDELTQANFRVEELEQALAAAEAKVEEQKDSVIRAAAEVENVRRRAAIDVEKAHKFALEKFANELLPVIDNMERALQGTSSEDEATKAIYEGVELTLKTFTSAVAKFGLTQVDPQGEAFNPDHHQAIGMQPSEEFPANTVMMVMQKGYMLNERLLRPAMVMVSQGGASVDTQA</sequence>
<gene>
    <name evidence="1" type="primary">grpE</name>
    <name type="ordered locus">Shew_2772</name>
</gene>
<reference key="1">
    <citation type="submission" date="2007-03" db="EMBL/GenBank/DDBJ databases">
        <title>Complete sequence of Shewanella loihica PV-4.</title>
        <authorList>
            <consortium name="US DOE Joint Genome Institute"/>
            <person name="Copeland A."/>
            <person name="Lucas S."/>
            <person name="Lapidus A."/>
            <person name="Barry K."/>
            <person name="Detter J.C."/>
            <person name="Glavina del Rio T."/>
            <person name="Hammon N."/>
            <person name="Israni S."/>
            <person name="Dalin E."/>
            <person name="Tice H."/>
            <person name="Pitluck S."/>
            <person name="Chain P."/>
            <person name="Malfatti S."/>
            <person name="Shin M."/>
            <person name="Vergez L."/>
            <person name="Schmutz J."/>
            <person name="Larimer F."/>
            <person name="Land M."/>
            <person name="Hauser L."/>
            <person name="Kyrpides N."/>
            <person name="Mikhailova N."/>
            <person name="Romine M.F."/>
            <person name="Serres G."/>
            <person name="Fredrickson J."/>
            <person name="Tiedje J."/>
            <person name="Richardson P."/>
        </authorList>
    </citation>
    <scope>NUCLEOTIDE SEQUENCE [LARGE SCALE GENOMIC DNA]</scope>
    <source>
        <strain>ATCC BAA-1088 / PV-4</strain>
    </source>
</reference>
<protein>
    <recommendedName>
        <fullName evidence="1">Protein GrpE</fullName>
    </recommendedName>
    <alternativeName>
        <fullName evidence="1">HSP-70 cofactor</fullName>
    </alternativeName>
</protein>
<accession>A3QGP0</accession>
<dbReference type="EMBL" id="CP000606">
    <property type="protein sequence ID" value="ABO24638.1"/>
    <property type="molecule type" value="Genomic_DNA"/>
</dbReference>
<dbReference type="RefSeq" id="WP_011866569.1">
    <property type="nucleotide sequence ID" value="NC_009092.1"/>
</dbReference>
<dbReference type="SMR" id="A3QGP0"/>
<dbReference type="STRING" id="323850.Shew_2772"/>
<dbReference type="KEGG" id="slo:Shew_2772"/>
<dbReference type="eggNOG" id="COG0576">
    <property type="taxonomic scope" value="Bacteria"/>
</dbReference>
<dbReference type="HOGENOM" id="CLU_057217_6_0_6"/>
<dbReference type="OrthoDB" id="9789811at2"/>
<dbReference type="Proteomes" id="UP000001558">
    <property type="component" value="Chromosome"/>
</dbReference>
<dbReference type="GO" id="GO:0005829">
    <property type="term" value="C:cytosol"/>
    <property type="evidence" value="ECO:0007669"/>
    <property type="project" value="TreeGrafter"/>
</dbReference>
<dbReference type="GO" id="GO:0000774">
    <property type="term" value="F:adenyl-nucleotide exchange factor activity"/>
    <property type="evidence" value="ECO:0007669"/>
    <property type="project" value="InterPro"/>
</dbReference>
<dbReference type="GO" id="GO:0042803">
    <property type="term" value="F:protein homodimerization activity"/>
    <property type="evidence" value="ECO:0007669"/>
    <property type="project" value="InterPro"/>
</dbReference>
<dbReference type="GO" id="GO:0051087">
    <property type="term" value="F:protein-folding chaperone binding"/>
    <property type="evidence" value="ECO:0007669"/>
    <property type="project" value="InterPro"/>
</dbReference>
<dbReference type="GO" id="GO:0051082">
    <property type="term" value="F:unfolded protein binding"/>
    <property type="evidence" value="ECO:0007669"/>
    <property type="project" value="TreeGrafter"/>
</dbReference>
<dbReference type="GO" id="GO:0006457">
    <property type="term" value="P:protein folding"/>
    <property type="evidence" value="ECO:0007669"/>
    <property type="project" value="InterPro"/>
</dbReference>
<dbReference type="CDD" id="cd00446">
    <property type="entry name" value="GrpE"/>
    <property type="match status" value="1"/>
</dbReference>
<dbReference type="FunFam" id="2.30.22.10:FF:000001">
    <property type="entry name" value="Protein GrpE"/>
    <property type="match status" value="1"/>
</dbReference>
<dbReference type="Gene3D" id="3.90.20.20">
    <property type="match status" value="1"/>
</dbReference>
<dbReference type="Gene3D" id="2.30.22.10">
    <property type="entry name" value="Head domain of nucleotide exchange factor GrpE"/>
    <property type="match status" value="1"/>
</dbReference>
<dbReference type="HAMAP" id="MF_01151">
    <property type="entry name" value="GrpE"/>
    <property type="match status" value="1"/>
</dbReference>
<dbReference type="InterPro" id="IPR000740">
    <property type="entry name" value="GrpE"/>
</dbReference>
<dbReference type="InterPro" id="IPR013805">
    <property type="entry name" value="GrpE_coiled_coil"/>
</dbReference>
<dbReference type="InterPro" id="IPR009012">
    <property type="entry name" value="GrpE_head"/>
</dbReference>
<dbReference type="NCBIfam" id="NF010737">
    <property type="entry name" value="PRK14139.1"/>
    <property type="match status" value="1"/>
</dbReference>
<dbReference type="NCBIfam" id="NF010738">
    <property type="entry name" value="PRK14140.1"/>
    <property type="match status" value="1"/>
</dbReference>
<dbReference type="NCBIfam" id="NF010748">
    <property type="entry name" value="PRK14150.1"/>
    <property type="match status" value="1"/>
</dbReference>
<dbReference type="PANTHER" id="PTHR21237">
    <property type="entry name" value="GRPE PROTEIN"/>
    <property type="match status" value="1"/>
</dbReference>
<dbReference type="PANTHER" id="PTHR21237:SF23">
    <property type="entry name" value="GRPE PROTEIN HOMOLOG, MITOCHONDRIAL"/>
    <property type="match status" value="1"/>
</dbReference>
<dbReference type="Pfam" id="PF01025">
    <property type="entry name" value="GrpE"/>
    <property type="match status" value="1"/>
</dbReference>
<dbReference type="PRINTS" id="PR00773">
    <property type="entry name" value="GRPEPROTEIN"/>
</dbReference>
<dbReference type="SUPFAM" id="SSF58014">
    <property type="entry name" value="Coiled-coil domain of nucleotide exchange factor GrpE"/>
    <property type="match status" value="1"/>
</dbReference>
<dbReference type="SUPFAM" id="SSF51064">
    <property type="entry name" value="Head domain of nucleotide exchange factor GrpE"/>
    <property type="match status" value="1"/>
</dbReference>
<dbReference type="PROSITE" id="PS01071">
    <property type="entry name" value="GRPE"/>
    <property type="match status" value="1"/>
</dbReference>